<reference key="1">
    <citation type="submission" date="1999-05" db="EMBL/GenBank/DDBJ databases">
        <title>A transcriptional activator, PyrR, regulates expression of pyrimidine biosynthetic genes in Pseudomonas aeruginosa and Pseudomonas putida.</title>
        <authorList>
            <person name="Patel M.V."/>
            <person name="Kumar A.P."/>
            <person name="Fields C.J."/>
            <person name="O'Donovan G.A."/>
        </authorList>
    </citation>
    <scope>NUCLEOTIDE SEQUENCE [GENOMIC DNA]</scope>
    <source>
        <strain>ATCC 15692 / DSM 22644 / CIP 104116 / JCM 14847 / LMG 12228 / 1C / PRS 101 / PAO1</strain>
    </source>
</reference>
<reference key="2">
    <citation type="journal article" date="2000" name="Nature">
        <title>Complete genome sequence of Pseudomonas aeruginosa PAO1, an opportunistic pathogen.</title>
        <authorList>
            <person name="Stover C.K."/>
            <person name="Pham X.-Q.T."/>
            <person name="Erwin A.L."/>
            <person name="Mizoguchi S.D."/>
            <person name="Warrener P."/>
            <person name="Hickey M.J."/>
            <person name="Brinkman F.S.L."/>
            <person name="Hufnagle W.O."/>
            <person name="Kowalik D.J."/>
            <person name="Lagrou M."/>
            <person name="Garber R.L."/>
            <person name="Goltry L."/>
            <person name="Tolentino E."/>
            <person name="Westbrock-Wadman S."/>
            <person name="Yuan Y."/>
            <person name="Brody L.L."/>
            <person name="Coulter S.N."/>
            <person name="Folger K.R."/>
            <person name="Kas A."/>
            <person name="Larbig K."/>
            <person name="Lim R.M."/>
            <person name="Smith K.A."/>
            <person name="Spencer D.H."/>
            <person name="Wong G.K.-S."/>
            <person name="Wu Z."/>
            <person name="Paulsen I.T."/>
            <person name="Reizer J."/>
            <person name="Saier M.H. Jr."/>
            <person name="Hancock R.E.W."/>
            <person name="Lory S."/>
            <person name="Olson M.V."/>
        </authorList>
    </citation>
    <scope>NUCLEOTIDE SEQUENCE [LARGE SCALE GENOMIC DNA]</scope>
    <source>
        <strain>ATCC 15692 / DSM 22644 / CIP 104116 / JCM 14847 / LMG 12228 / 1C / PRS 101 / PAO1</strain>
    </source>
</reference>
<sequence>MSLPNPAELLPRMASDLRAHLAERGIERPRFVGIHTGGIWVAEALLRELGNQEPLGTLDVSFYRDDFTQNGLHPQVRPSALPFEIDGQHLVLVDDVLMSGRTIRAALNELFDYGRPASVTLVCLLDLNARELPIRPDVVGQTLSLGRDERVKLVGPAPLALERKVLSSAS</sequence>
<dbReference type="EC" id="2.4.2.9" evidence="2"/>
<dbReference type="EMBL" id="AF148692">
    <property type="protein sequence ID" value="AAD34602.1"/>
    <property type="molecule type" value="Genomic_DNA"/>
</dbReference>
<dbReference type="EMBL" id="AE004091">
    <property type="protein sequence ID" value="AAG03792.1"/>
    <property type="molecule type" value="Genomic_DNA"/>
</dbReference>
<dbReference type="PIR" id="A83596">
    <property type="entry name" value="A83596"/>
</dbReference>
<dbReference type="RefSeq" id="NP_249094.1">
    <property type="nucleotide sequence ID" value="NC_002516.2"/>
</dbReference>
<dbReference type="RefSeq" id="WP_003084574.1">
    <property type="nucleotide sequence ID" value="NZ_QZGE01000016.1"/>
</dbReference>
<dbReference type="SMR" id="Q9X6W6"/>
<dbReference type="STRING" id="208964.PA0403"/>
<dbReference type="PaxDb" id="208964-PA0403"/>
<dbReference type="DNASU" id="878259"/>
<dbReference type="GeneID" id="878259"/>
<dbReference type="KEGG" id="pae:PA0403"/>
<dbReference type="PATRIC" id="fig|208964.12.peg.424"/>
<dbReference type="PseudoCAP" id="PA0403"/>
<dbReference type="HOGENOM" id="CLU_094234_1_1_6"/>
<dbReference type="InParanoid" id="Q9X6W6"/>
<dbReference type="OrthoDB" id="9802227at2"/>
<dbReference type="PhylomeDB" id="Q9X6W6"/>
<dbReference type="BioCyc" id="PAER208964:G1FZ6-407-MONOMER"/>
<dbReference type="Proteomes" id="UP000002438">
    <property type="component" value="Chromosome"/>
</dbReference>
<dbReference type="GO" id="GO:0004845">
    <property type="term" value="F:uracil phosphoribosyltransferase activity"/>
    <property type="evidence" value="ECO:0007669"/>
    <property type="project" value="UniProtKB-UniRule"/>
</dbReference>
<dbReference type="GO" id="GO:0006355">
    <property type="term" value="P:regulation of DNA-templated transcription"/>
    <property type="evidence" value="ECO:0007669"/>
    <property type="project" value="UniProtKB-UniRule"/>
</dbReference>
<dbReference type="CDD" id="cd06223">
    <property type="entry name" value="PRTases_typeI"/>
    <property type="match status" value="1"/>
</dbReference>
<dbReference type="Gene3D" id="3.40.50.2020">
    <property type="match status" value="1"/>
</dbReference>
<dbReference type="HAMAP" id="MF_01219">
    <property type="entry name" value="PyrR"/>
    <property type="match status" value="1"/>
</dbReference>
<dbReference type="InterPro" id="IPR000836">
    <property type="entry name" value="PRibTrfase_dom"/>
</dbReference>
<dbReference type="InterPro" id="IPR029057">
    <property type="entry name" value="PRTase-like"/>
</dbReference>
<dbReference type="InterPro" id="IPR023050">
    <property type="entry name" value="PyrR"/>
</dbReference>
<dbReference type="InterPro" id="IPR050137">
    <property type="entry name" value="PyrR_bifunctional"/>
</dbReference>
<dbReference type="NCBIfam" id="NF003545">
    <property type="entry name" value="PRK05205.1-1"/>
    <property type="match status" value="1"/>
</dbReference>
<dbReference type="PANTHER" id="PTHR11608">
    <property type="entry name" value="BIFUNCTIONAL PROTEIN PYRR"/>
    <property type="match status" value="1"/>
</dbReference>
<dbReference type="PANTHER" id="PTHR11608:SF0">
    <property type="entry name" value="BIFUNCTIONAL PROTEIN PYRR"/>
    <property type="match status" value="1"/>
</dbReference>
<dbReference type="Pfam" id="PF00156">
    <property type="entry name" value="Pribosyltran"/>
    <property type="match status" value="1"/>
</dbReference>
<dbReference type="SUPFAM" id="SSF53271">
    <property type="entry name" value="PRTase-like"/>
    <property type="match status" value="1"/>
</dbReference>
<keyword id="KW-0328">Glycosyltransferase</keyword>
<keyword id="KW-1185">Reference proteome</keyword>
<keyword id="KW-0804">Transcription</keyword>
<keyword id="KW-0805">Transcription regulation</keyword>
<keyword id="KW-0808">Transferase</keyword>
<comment type="function">
    <text evidence="2">Regulates the transcription of the pyrimidine nucleotide (pyr) operon in response to exogenous pyrimidines.</text>
</comment>
<comment type="function">
    <text evidence="2">Also displays a weak uracil phosphoribosyltransferase activity which is not physiologically significant.</text>
</comment>
<comment type="catalytic activity">
    <reaction evidence="2">
        <text>UMP + diphosphate = 5-phospho-alpha-D-ribose 1-diphosphate + uracil</text>
        <dbReference type="Rhea" id="RHEA:13017"/>
        <dbReference type="ChEBI" id="CHEBI:17568"/>
        <dbReference type="ChEBI" id="CHEBI:33019"/>
        <dbReference type="ChEBI" id="CHEBI:57865"/>
        <dbReference type="ChEBI" id="CHEBI:58017"/>
        <dbReference type="EC" id="2.4.2.9"/>
    </reaction>
</comment>
<comment type="similarity">
    <text evidence="2">Belongs to the purine/pyrimidine phosphoribosyltransferase family. PyrR subfamily.</text>
</comment>
<gene>
    <name evidence="2" type="primary">pyrR</name>
    <name type="ordered locus">PA0403</name>
</gene>
<feature type="chain" id="PRO_0000183049" description="Bifunctional protein PyrR">
    <location>
        <begin position="1"/>
        <end position="170"/>
    </location>
</feature>
<feature type="short sequence motif" description="PRPP-binding" evidence="2">
    <location>
        <begin position="90"/>
        <end position="102"/>
    </location>
</feature>
<feature type="binding site" evidence="1">
    <location>
        <begin position="36"/>
        <end position="37"/>
    </location>
    <ligand>
        <name>substrate</name>
    </ligand>
</feature>
<feature type="binding site" evidence="1">
    <location>
        <position position="77"/>
    </location>
    <ligand>
        <name>substrate</name>
    </ligand>
</feature>
<feature type="binding site" evidence="1">
    <location>
        <begin position="94"/>
        <end position="102"/>
    </location>
    <ligand>
        <name>substrate</name>
    </ligand>
</feature>
<feature type="binding site" evidence="1">
    <location>
        <position position="151"/>
    </location>
    <ligand>
        <name>substrate</name>
    </ligand>
</feature>
<accession>Q9X6W6</accession>
<proteinExistence type="inferred from homology"/>
<protein>
    <recommendedName>
        <fullName evidence="2">Bifunctional protein PyrR</fullName>
    </recommendedName>
    <domain>
        <recommendedName>
            <fullName evidence="2">Pyrimidine operon regulatory protein</fullName>
        </recommendedName>
    </domain>
    <domain>
        <recommendedName>
            <fullName evidence="2">Uracil phosphoribosyltransferase</fullName>
            <shortName evidence="2">UPRTase</shortName>
            <ecNumber evidence="2">2.4.2.9</ecNumber>
        </recommendedName>
    </domain>
</protein>
<evidence type="ECO:0000250" key="1"/>
<evidence type="ECO:0000255" key="2">
    <source>
        <dbReference type="HAMAP-Rule" id="MF_01219"/>
    </source>
</evidence>
<name>PYRR_PSEAE</name>
<organism>
    <name type="scientific">Pseudomonas aeruginosa (strain ATCC 15692 / DSM 22644 / CIP 104116 / JCM 14847 / LMG 12228 / 1C / PRS 101 / PAO1)</name>
    <dbReference type="NCBI Taxonomy" id="208964"/>
    <lineage>
        <taxon>Bacteria</taxon>
        <taxon>Pseudomonadati</taxon>
        <taxon>Pseudomonadota</taxon>
        <taxon>Gammaproteobacteria</taxon>
        <taxon>Pseudomonadales</taxon>
        <taxon>Pseudomonadaceae</taxon>
        <taxon>Pseudomonas</taxon>
    </lineage>
</organism>